<accession>P22894</accession>
<accession>Q45F99</accession>
<organism>
    <name type="scientific">Homo sapiens</name>
    <name type="common">Human</name>
    <dbReference type="NCBI Taxonomy" id="9606"/>
    <lineage>
        <taxon>Eukaryota</taxon>
        <taxon>Metazoa</taxon>
        <taxon>Chordata</taxon>
        <taxon>Craniata</taxon>
        <taxon>Vertebrata</taxon>
        <taxon>Euteleostomi</taxon>
        <taxon>Mammalia</taxon>
        <taxon>Eutheria</taxon>
        <taxon>Euarchontoglires</taxon>
        <taxon>Primates</taxon>
        <taxon>Haplorrhini</taxon>
        <taxon>Catarrhini</taxon>
        <taxon>Hominidae</taxon>
        <taxon>Homo</taxon>
    </lineage>
</organism>
<gene>
    <name type="primary">MMP8</name>
    <name type="synonym">CLG1</name>
</gene>
<feature type="signal peptide" evidence="3 4">
    <location>
        <begin position="1"/>
        <end position="20"/>
    </location>
</feature>
<feature type="propeptide" id="PRO_0000028744" description="Activation peptide">
    <location>
        <begin position="21"/>
        <end position="100"/>
    </location>
</feature>
<feature type="chain" id="PRO_0000028745" description="Neutrophil collagenase">
    <location>
        <begin position="101"/>
        <end position="467"/>
    </location>
</feature>
<feature type="repeat" description="Hemopexin 1">
    <location>
        <begin position="276"/>
        <end position="325"/>
    </location>
</feature>
<feature type="repeat" description="Hemopexin 2">
    <location>
        <begin position="326"/>
        <end position="372"/>
    </location>
</feature>
<feature type="repeat" description="Hemopexin 3">
    <location>
        <begin position="374"/>
        <end position="420"/>
    </location>
</feature>
<feature type="repeat" description="Hemopexin 4">
    <location>
        <begin position="421"/>
        <end position="464"/>
    </location>
</feature>
<feature type="short sequence motif" description="Cysteine switch" evidence="1">
    <location>
        <begin position="89"/>
        <end position="96"/>
    </location>
</feature>
<feature type="active site">
    <location>
        <position position="218"/>
    </location>
</feature>
<feature type="binding site" description="in inhibited form">
    <location>
        <position position="91"/>
    </location>
    <ligand>
        <name>Zn(2+)</name>
        <dbReference type="ChEBI" id="CHEBI:29105"/>
        <label>2</label>
        <note>catalytic</note>
    </ligand>
</feature>
<feature type="binding site">
    <location>
        <position position="157"/>
    </location>
    <ligand>
        <name>Ca(2+)</name>
        <dbReference type="ChEBI" id="CHEBI:29108"/>
        <label>1</label>
    </ligand>
</feature>
<feature type="binding site" evidence="5">
    <location>
        <position position="167"/>
    </location>
    <ligand>
        <name>Zn(2+)</name>
        <dbReference type="ChEBI" id="CHEBI:29105"/>
        <label>1</label>
    </ligand>
</feature>
<feature type="binding site" evidence="5">
    <location>
        <position position="169"/>
    </location>
    <ligand>
        <name>Zn(2+)</name>
        <dbReference type="ChEBI" id="CHEBI:29105"/>
        <label>1</label>
    </ligand>
</feature>
<feature type="binding site" evidence="5">
    <location>
        <position position="174"/>
    </location>
    <ligand>
        <name>Ca(2+)</name>
        <dbReference type="ChEBI" id="CHEBI:29108"/>
        <label>2</label>
    </ligand>
</feature>
<feature type="binding site" evidence="5">
    <location>
        <position position="175"/>
    </location>
    <ligand>
        <name>Ca(2+)</name>
        <dbReference type="ChEBI" id="CHEBI:29108"/>
        <label>2</label>
    </ligand>
</feature>
<feature type="binding site" evidence="5">
    <location>
        <position position="177"/>
    </location>
    <ligand>
        <name>Ca(2+)</name>
        <dbReference type="ChEBI" id="CHEBI:29108"/>
        <label>2</label>
    </ligand>
</feature>
<feature type="binding site" evidence="5">
    <location>
        <position position="179"/>
    </location>
    <ligand>
        <name>Ca(2+)</name>
        <dbReference type="ChEBI" id="CHEBI:29108"/>
        <label>2</label>
    </ligand>
</feature>
<feature type="binding site" evidence="5">
    <location>
        <position position="182"/>
    </location>
    <ligand>
        <name>Zn(2+)</name>
        <dbReference type="ChEBI" id="CHEBI:29105"/>
        <label>1</label>
    </ligand>
</feature>
<feature type="binding site">
    <location>
        <position position="189"/>
    </location>
    <ligand>
        <name>Ca(2+)</name>
        <dbReference type="ChEBI" id="CHEBI:29108"/>
        <label>1</label>
    </ligand>
</feature>
<feature type="binding site">
    <location>
        <position position="191"/>
    </location>
    <ligand>
        <name>Ca(2+)</name>
        <dbReference type="ChEBI" id="CHEBI:29108"/>
        <label>1</label>
    </ligand>
</feature>
<feature type="binding site">
    <location>
        <position position="193"/>
    </location>
    <ligand>
        <name>Ca(2+)</name>
        <dbReference type="ChEBI" id="CHEBI:29108"/>
        <label>1</label>
    </ligand>
</feature>
<feature type="binding site" evidence="5">
    <location>
        <position position="195"/>
    </location>
    <ligand>
        <name>Zn(2+)</name>
        <dbReference type="ChEBI" id="CHEBI:29105"/>
        <label>1</label>
    </ligand>
</feature>
<feature type="binding site" evidence="5">
    <location>
        <position position="197"/>
    </location>
    <ligand>
        <name>Ca(2+)</name>
        <dbReference type="ChEBI" id="CHEBI:29108"/>
        <label>2</label>
    </ligand>
</feature>
<feature type="binding site" evidence="5">
    <location>
        <position position="200"/>
    </location>
    <ligand>
        <name>Ca(2+)</name>
        <dbReference type="ChEBI" id="CHEBI:29108"/>
        <label>2</label>
    </ligand>
</feature>
<feature type="binding site" evidence="5">
    <location>
        <position position="217"/>
    </location>
    <ligand>
        <name>Zn(2+)</name>
        <dbReference type="ChEBI" id="CHEBI:29105"/>
        <label>2</label>
        <note>catalytic</note>
    </ligand>
</feature>
<feature type="binding site" evidence="5">
    <location>
        <position position="221"/>
    </location>
    <ligand>
        <name>Zn(2+)</name>
        <dbReference type="ChEBI" id="CHEBI:29105"/>
        <label>2</label>
        <note>catalytic</note>
    </ligand>
</feature>
<feature type="binding site" evidence="5">
    <location>
        <position position="227"/>
    </location>
    <ligand>
        <name>Zn(2+)</name>
        <dbReference type="ChEBI" id="CHEBI:29105"/>
        <label>2</label>
        <note>catalytic</note>
    </ligand>
</feature>
<feature type="binding site" evidence="1">
    <location>
        <position position="286"/>
    </location>
    <ligand>
        <name>Ca(2+)</name>
        <dbReference type="ChEBI" id="CHEBI:29108"/>
        <label>3</label>
    </ligand>
</feature>
<feature type="binding site" evidence="1">
    <location>
        <position position="378"/>
    </location>
    <ligand>
        <name>Ca(2+)</name>
        <dbReference type="ChEBI" id="CHEBI:29108"/>
        <label>3</label>
    </ligand>
</feature>
<feature type="binding site" evidence="1">
    <location>
        <position position="425"/>
    </location>
    <ligand>
        <name>Ca(2+)</name>
        <dbReference type="ChEBI" id="CHEBI:29108"/>
        <label>3</label>
    </ligand>
</feature>
<feature type="glycosylation site" description="N-linked (GlcNAc...) asparagine" evidence="7">
    <location>
        <position position="54"/>
    </location>
</feature>
<feature type="glycosylation site" description="N-linked (GlcNAc...) asparagine" evidence="7">
    <location>
        <position position="73"/>
    </location>
</feature>
<feature type="glycosylation site" description="N-linked (GlcNAc...) asparagine">
    <location>
        <position position="112"/>
    </location>
</feature>
<feature type="glycosylation site" description="N-linked (GlcNAc...) asparagine" evidence="2">
    <location>
        <position position="204"/>
    </location>
</feature>
<feature type="glycosylation site" description="N-linked (GlcNAc...) asparagine" evidence="2">
    <location>
        <position position="246"/>
    </location>
</feature>
<feature type="disulfide bond" evidence="7">
    <location>
        <begin position="279"/>
        <end position="464"/>
    </location>
</feature>
<feature type="sequence variant" id="VAR_025036" description="In dbSNP:rs17099450." evidence="6">
    <original>S</original>
    <variation>C</variation>
    <location>
        <position position="3"/>
    </location>
</feature>
<feature type="sequence variant" id="VAR_025037" description="In dbSNP:rs3765620." evidence="4 6">
    <original>T</original>
    <variation>I</variation>
    <location>
        <position position="32"/>
    </location>
</feature>
<feature type="sequence variant" id="VAR_006730" description="In dbSNP:rs1940475." evidence="6">
    <original>K</original>
    <variation>E</variation>
    <location>
        <position position="87"/>
    </location>
</feature>
<feature type="sequence variant" id="VAR_025038" description="In dbSNP:rs35056226." evidence="6">
    <original>G</original>
    <variation>E</variation>
    <location>
        <position position="154"/>
    </location>
</feature>
<feature type="sequence variant" id="VAR_025039" description="In dbSNP:rs34428739." evidence="6">
    <original>D</original>
    <variation>V</variation>
    <location>
        <position position="193"/>
    </location>
</feature>
<feature type="sequence variant" id="VAR_025040" description="In dbSNP:rs35243553." evidence="6">
    <original>N</original>
    <variation>Y</variation>
    <location>
        <position position="246"/>
    </location>
</feature>
<feature type="sequence variant" id="VAR_025041" description="In dbSNP:rs34009635." evidence="6">
    <original>V</original>
    <variation>A</variation>
    <location>
        <position position="436"/>
    </location>
</feature>
<feature type="sequence variant" id="VAR_025042" description="In dbSNP:rs35866072." evidence="6">
    <original>K</original>
    <variation>T</variation>
    <location>
        <position position="460"/>
    </location>
</feature>
<feature type="sequence conflict" description="In Ref. 4; AA sequence." evidence="7" ref="4">
    <original>F</original>
    <variation>I</variation>
    <location>
        <position position="40"/>
    </location>
</feature>
<feature type="sequence conflict" description="In Ref. 4; AA sequence." evidence="7" ref="4">
    <original>Y</original>
    <variation>V</variation>
    <location>
        <position position="48"/>
    </location>
</feature>
<feature type="strand" evidence="10">
    <location>
        <begin position="107"/>
        <end position="109"/>
    </location>
</feature>
<feature type="strand" evidence="8">
    <location>
        <begin position="111"/>
        <end position="117"/>
    </location>
</feature>
<feature type="strand" evidence="9">
    <location>
        <begin position="122"/>
        <end position="124"/>
    </location>
</feature>
<feature type="helix" evidence="8">
    <location>
        <begin position="126"/>
        <end position="141"/>
    </location>
</feature>
<feature type="strand" evidence="8">
    <location>
        <begin position="147"/>
        <end position="150"/>
    </location>
</feature>
<feature type="strand" evidence="8">
    <location>
        <begin position="152"/>
        <end position="154"/>
    </location>
</feature>
<feature type="strand" evidence="8">
    <location>
        <begin position="157"/>
        <end position="163"/>
    </location>
</feature>
<feature type="strand" evidence="8">
    <location>
        <begin position="168"/>
        <end position="170"/>
    </location>
</feature>
<feature type="strand" evidence="8">
    <location>
        <begin position="175"/>
        <end position="178"/>
    </location>
</feature>
<feature type="strand" evidence="8">
    <location>
        <begin position="181"/>
        <end position="183"/>
    </location>
</feature>
<feature type="strand" evidence="8">
    <location>
        <begin position="186"/>
        <end position="188"/>
    </location>
</feature>
<feature type="turn" evidence="8">
    <location>
        <begin position="189"/>
        <end position="192"/>
    </location>
</feature>
<feature type="strand" evidence="8">
    <location>
        <begin position="194"/>
        <end position="197"/>
    </location>
</feature>
<feature type="strand" evidence="8">
    <location>
        <begin position="203"/>
        <end position="208"/>
    </location>
</feature>
<feature type="helix" evidence="8">
    <location>
        <begin position="211"/>
        <end position="223"/>
    </location>
</feature>
<feature type="strand" evidence="8">
    <location>
        <begin position="236"/>
        <end position="238"/>
    </location>
</feature>
<feature type="strand" evidence="11">
    <location>
        <begin position="244"/>
        <end position="246"/>
    </location>
</feature>
<feature type="helix" evidence="8">
    <location>
        <begin position="251"/>
        <end position="261"/>
    </location>
</feature>
<reference key="1">
    <citation type="journal article" date="1990" name="J. Biol. Chem.">
        <title>Human neutrophil collagenase. A distinct gene product with homology to other matrix metalloproteinases.</title>
        <authorList>
            <person name="Hasty K.A."/>
            <person name="Pourmotabbed T.F."/>
            <person name="Goldberg G.I."/>
            <person name="Thompson J.P."/>
            <person name="Spinella D.G."/>
            <person name="Stevens R.M."/>
            <person name="Mainardi C.L."/>
        </authorList>
    </citation>
    <scope>NUCLEOTIDE SEQUENCE [MRNA]</scope>
    <scope>PROTEIN SEQUENCE OF 314-337; 347-363 AND 424-441</scope>
    <source>
        <tissue>Neutrophil</tissue>
    </source>
</reference>
<reference key="2">
    <citation type="submission" date="2005-07" db="EMBL/GenBank/DDBJ databases">
        <authorList>
            <consortium name="NIEHS SNPs program"/>
        </authorList>
    </citation>
    <scope>NUCLEOTIDE SEQUENCE [GENOMIC DNA]</scope>
    <scope>VARIANTS CYS-3; ILE-32; GLU-87; GLU-154; VAL-193; TYR-246; ALA-436 AND THR-460</scope>
</reference>
<reference key="3">
    <citation type="journal article" date="2004" name="Genome Res.">
        <title>The status, quality, and expansion of the NIH full-length cDNA project: the Mammalian Gene Collection (MGC).</title>
        <authorList>
            <consortium name="The MGC Project Team"/>
        </authorList>
    </citation>
    <scope>NUCLEOTIDE SEQUENCE [LARGE SCALE MRNA]</scope>
    <source>
        <tissue>Lung</tissue>
    </source>
</reference>
<reference key="4">
    <citation type="journal article" date="1990" name="Eur. J. Biochem.">
        <title>Characterization and activation of procollagenase from human polymorphonuclear leucocytes. N-terminal sequence determination of the proenzyme and various proteolytically activated forms.</title>
        <authorList>
            <person name="Knaeuper V."/>
            <person name="Kraemer S."/>
            <person name="Reinke H."/>
            <person name="Tschesche H."/>
        </authorList>
    </citation>
    <scope>PROTEIN SEQUENCE OF 21-140</scope>
    <scope>VARIANT ILE-32</scope>
    <source>
        <tissue>Neutrophil</tissue>
    </source>
</reference>
<reference key="5">
    <citation type="journal article" date="1991" name="Eur. J. Biochem.">
        <title>Mercurial activation of human polymorphonuclear leucocyte procollagenase.</title>
        <authorList>
            <person name="Blaeser J."/>
            <person name="Knaeuper V."/>
            <person name="Osthues A."/>
            <person name="Reinke H."/>
            <person name="Tschesche H."/>
        </authorList>
    </citation>
    <scope>PROTEIN SEQUENCE OF 21-103</scope>
    <source>
        <tissue>Neutrophil</tissue>
    </source>
</reference>
<reference key="6">
    <citation type="journal article" date="1990" name="Biochemistry">
        <title>Characterization of 58-kilodalton human neutrophil collagenase: comparison with human fibroblast collagenase.</title>
        <authorList>
            <person name="Mallya S.K."/>
            <person name="Mookthiar K.A."/>
            <person name="Gao Y."/>
            <person name="Brew K."/>
            <person name="Dioszegi M."/>
            <person name="Birkedal-Hansen H."/>
            <person name="van Wart H.E."/>
        </authorList>
    </citation>
    <scope>PROTEIN SEQUENCE OF 85-120</scope>
    <scope>CHARACTERIZATION</scope>
    <source>
        <tissue>Neutrophil</tissue>
    </source>
</reference>
<reference key="7">
    <citation type="journal article" date="1990" name="Biol. Chem. Hoppe-Seyler">
        <title>Partial amino acid sequence of human PMN leukocyte procollagenase.</title>
        <authorList>
            <person name="Knaeuper V."/>
            <person name="Kraemer S."/>
            <person name="Reinke H."/>
            <person name="Tschesche H."/>
        </authorList>
    </citation>
    <scope>PARTIAL PROTEIN SEQUENCE</scope>
</reference>
<reference key="8">
    <citation type="journal article" date="1990" name="Biol. Chem. Hoppe-Seyler">
        <authorList>
            <person name="Knaeuper V."/>
            <person name="Kraemer S."/>
            <person name="Reinke H."/>
            <person name="Tschesche H."/>
        </authorList>
    </citation>
    <scope>ERRATUM OF PUBMED:2169256</scope>
</reference>
<reference key="9">
    <citation type="journal article" date="1992" name="FEBS Lett.">
        <title>Formation of a covalent Hg-Cys-bond during mercurial activation of PMNL procollagenase gives evidence of a cysteine-switch mechanism.</title>
        <authorList>
            <person name="Blaeser J."/>
            <person name="Triebel S."/>
            <person name="Reinke H."/>
            <person name="Tschesche H."/>
        </authorList>
    </citation>
    <scope>CYSTEINE-SWITCH MECHANISM</scope>
    <source>
        <tissue>Neutrophil</tissue>
    </source>
</reference>
<reference key="10">
    <citation type="journal article" date="1994" name="EMBO J.">
        <title>The X-ray crystal structure of the catalytic domain of human neutrophil collagenase inhibited by a substrate analogue reveals the essentials for catalysis and specificity.</title>
        <authorList>
            <person name="Bode W."/>
            <person name="Reinemer P."/>
            <person name="Huber R."/>
            <person name="Klein T."/>
            <person name="Schnierer S."/>
            <person name="Tschesche H."/>
        </authorList>
    </citation>
    <scope>X-RAY CRYSTALLOGRAPHY (2.0 ANGSTROMS) OF 100-262</scope>
</reference>
<reference key="11">
    <citation type="journal article" date="1994" name="FEBS Lett.">
        <title>Structural implications for the role of the N-terminus in the 'superactivation' of collagenases. A crystallographic study.</title>
        <authorList>
            <person name="Reinemer P."/>
            <person name="Grams F."/>
            <person name="Huber R."/>
            <person name="Kleine T."/>
            <person name="Schnierer S."/>
            <person name="Piper M."/>
            <person name="Tschesche H."/>
            <person name="Bode W."/>
        </authorList>
    </citation>
    <scope>X-RAY CRYSTALLOGRAPHY (2.5 ANGSTROMS) OF 100-262</scope>
</reference>
<reference key="12">
    <citation type="journal article" date="1994" name="Nat. Struct. Biol.">
        <title>Structure of human neutrophil collagenase reveals large S1' specificity pocket.</title>
        <authorList>
            <person name="Stams T."/>
            <person name="Spurlino J.C."/>
            <person name="Smith D.L."/>
            <person name="Wahl R.C."/>
            <person name="Ho T.F."/>
            <person name="Qoronfleh M.W."/>
            <person name="Banks T.M."/>
            <person name="Rubin B."/>
        </authorList>
    </citation>
    <scope>X-RAY CRYSTALLOGRAPHY (2.1 ANGSTROMS) OF 100-262</scope>
</reference>
<reference key="13">
    <citation type="journal article" date="1997" name="Eur. J. Biochem.">
        <title>1.8-A crystal structure of the catalytic domain of human neutrophil collagenase (matrix metalloproteinase-8) complexed with a peptidomimetic hydroxamate primed-side inhibitor with a distinct selectivity profile.</title>
        <authorList>
            <person name="Betz M."/>
            <person name="Huxley P."/>
            <person name="Davies S.J."/>
            <person name="Mushtaq Y."/>
            <person name="Pieper M."/>
            <person name="Tschesche H."/>
            <person name="Bode W."/>
            <person name="Gomis-Rueth F.-X."/>
        </authorList>
    </citation>
    <scope>X-RAY CRYSTALLOGRAPHY (1.81 ANGSTROMS) OF 100-262</scope>
</reference>
<reference key="14">
    <citation type="journal article" date="1998" name="Protein Sci.">
        <title>Structure of malonic acid-based inhibitors bound to human neutrophil collagenase. A new binding mode explains apparently anomalous data.</title>
        <authorList>
            <person name="Brandstetter H."/>
            <person name="Engh R.A."/>
            <person name="von Roedern E.G."/>
            <person name="Moroder L."/>
            <person name="Huber R."/>
            <person name="Bode W."/>
            <person name="Grams F."/>
        </authorList>
    </citation>
    <scope>X-RAY CRYSTALLOGRAPHY (2.0 ANGSTROMS) OF 105-262</scope>
</reference>
<proteinExistence type="evidence at protein level"/>
<sequence length="467" mass="53412">MFSLKTLPFLLLLHVQISKAFPVSSKEKNTKTVQDYLEKFYQLPSNQYQSTRKNGTNVIVEKLKEMQRFFGLNVTGKPNEETLDMMKKPRCGVPDSGGFMLTPGNPKWERTNLTYRIRNYTPQLSEAEVERAIKDAFELWSVASPLIFTRISQGEADINIAFYQRDHGDNSPFDGPNGILAHAFQPGQGIGGDAHFDAEETWTNTSANYNLFLVAAHEFGHSLGLAHSSDPGALMYPNYAFRETSNYSLPQDDIDGIQAIYGLSSNPIQPTGPSTPKPCDPSLTFDAITTLRGEILFFKDRYFWRRHPQLQRVEMNFISLFWPSLPTGIQAAYEDFDRDLIFLFKGNQYWALSGYDILQGYPKDISNYGFPSSVQAIDAAVFYRSKTYFFVNDQFWRYDNQRQFMEPGYPKSISGAFPGIESKVDAVFQQEHFFHVFSGPRYYAFDLIAQRVTRVARGNKWLNCRYG</sequence>
<dbReference type="EC" id="3.4.24.34"/>
<dbReference type="EMBL" id="J05556">
    <property type="protein sequence ID" value="AAA88021.1"/>
    <property type="molecule type" value="mRNA"/>
</dbReference>
<dbReference type="EMBL" id="DQ141306">
    <property type="protein sequence ID" value="AAZ38714.1"/>
    <property type="molecule type" value="Genomic_DNA"/>
</dbReference>
<dbReference type="EMBL" id="BC074988">
    <property type="protein sequence ID" value="AAH74988.1"/>
    <property type="molecule type" value="mRNA"/>
</dbReference>
<dbReference type="EMBL" id="BC074989">
    <property type="protein sequence ID" value="AAH74989.1"/>
    <property type="molecule type" value="mRNA"/>
</dbReference>
<dbReference type="CCDS" id="CCDS8320.1"/>
<dbReference type="PIR" id="A37073">
    <property type="entry name" value="KCHUN"/>
</dbReference>
<dbReference type="RefSeq" id="NP_001291370.1">
    <property type="nucleotide sequence ID" value="NM_001304441.1"/>
</dbReference>
<dbReference type="RefSeq" id="NP_001291371.1">
    <property type="nucleotide sequence ID" value="NM_001304442.1"/>
</dbReference>
<dbReference type="RefSeq" id="NP_002415.1">
    <property type="nucleotide sequence ID" value="NM_002424.3"/>
</dbReference>
<dbReference type="PDB" id="1A85">
    <property type="method" value="X-ray"/>
    <property type="resolution" value="2.00 A"/>
    <property type="chains" value="A=105-262"/>
</dbReference>
<dbReference type="PDB" id="1A86">
    <property type="method" value="X-ray"/>
    <property type="resolution" value="2.00 A"/>
    <property type="chains" value="A=105-262"/>
</dbReference>
<dbReference type="PDB" id="1BZS">
    <property type="method" value="X-ray"/>
    <property type="resolution" value="1.70 A"/>
    <property type="chains" value="A=99-262"/>
</dbReference>
<dbReference type="PDB" id="1I73">
    <property type="method" value="X-ray"/>
    <property type="resolution" value="1.40 A"/>
    <property type="chains" value="A=100-262"/>
</dbReference>
<dbReference type="PDB" id="1I76">
    <property type="method" value="X-ray"/>
    <property type="resolution" value="1.20 A"/>
    <property type="chains" value="A=100-262"/>
</dbReference>
<dbReference type="PDB" id="1JAN">
    <property type="method" value="X-ray"/>
    <property type="resolution" value="2.50 A"/>
    <property type="chains" value="A=99-262"/>
</dbReference>
<dbReference type="PDB" id="1JAO">
    <property type="method" value="X-ray"/>
    <property type="resolution" value="2.40 A"/>
    <property type="chains" value="A=100-262"/>
</dbReference>
<dbReference type="PDB" id="1JAP">
    <property type="method" value="X-ray"/>
    <property type="resolution" value="1.82 A"/>
    <property type="chains" value="A=100-262"/>
</dbReference>
<dbReference type="PDB" id="1JAQ">
    <property type="method" value="X-ray"/>
    <property type="resolution" value="2.40 A"/>
    <property type="chains" value="A=100-262"/>
</dbReference>
<dbReference type="PDB" id="1JH1">
    <property type="method" value="X-ray"/>
    <property type="resolution" value="2.70 A"/>
    <property type="chains" value="A=105-262"/>
</dbReference>
<dbReference type="PDB" id="1JJ9">
    <property type="method" value="X-ray"/>
    <property type="resolution" value="2.00 A"/>
    <property type="chains" value="A=100-262"/>
</dbReference>
<dbReference type="PDB" id="1KBC">
    <property type="method" value="X-ray"/>
    <property type="resolution" value="1.80 A"/>
    <property type="chains" value="A/B=99-262"/>
</dbReference>
<dbReference type="PDB" id="1MMB">
    <property type="method" value="X-ray"/>
    <property type="resolution" value="2.10 A"/>
    <property type="chains" value="A=100-262"/>
</dbReference>
<dbReference type="PDB" id="1MNC">
    <property type="method" value="X-ray"/>
    <property type="resolution" value="2.10 A"/>
    <property type="chains" value="A=101-263"/>
</dbReference>
<dbReference type="PDB" id="1ZP5">
    <property type="method" value="X-ray"/>
    <property type="resolution" value="1.80 A"/>
    <property type="chains" value="A=100-262"/>
</dbReference>
<dbReference type="PDB" id="1ZS0">
    <property type="method" value="X-ray"/>
    <property type="resolution" value="1.56 A"/>
    <property type="chains" value="A=100-262"/>
</dbReference>
<dbReference type="PDB" id="1ZVX">
    <property type="method" value="X-ray"/>
    <property type="resolution" value="1.87 A"/>
    <property type="chains" value="A=100-262"/>
</dbReference>
<dbReference type="PDB" id="2OY2">
    <property type="method" value="X-ray"/>
    <property type="resolution" value="1.50 A"/>
    <property type="chains" value="A/F=105-262"/>
</dbReference>
<dbReference type="PDB" id="2OY4">
    <property type="method" value="X-ray"/>
    <property type="resolution" value="1.70 A"/>
    <property type="chains" value="A/F=105-262"/>
</dbReference>
<dbReference type="PDB" id="3DNG">
    <property type="method" value="X-ray"/>
    <property type="resolution" value="2.00 A"/>
    <property type="chains" value="A/B=100-262"/>
</dbReference>
<dbReference type="PDB" id="3DPE">
    <property type="method" value="X-ray"/>
    <property type="resolution" value="1.60 A"/>
    <property type="chains" value="A=100-262"/>
</dbReference>
<dbReference type="PDB" id="3DPF">
    <property type="method" value="X-ray"/>
    <property type="resolution" value="2.10 A"/>
    <property type="chains" value="A/B=100-262"/>
</dbReference>
<dbReference type="PDB" id="3TT4">
    <property type="method" value="X-ray"/>
    <property type="resolution" value="1.88 A"/>
    <property type="chains" value="A=104-262"/>
</dbReference>
<dbReference type="PDB" id="4QKZ">
    <property type="method" value="X-ray"/>
    <property type="resolution" value="1.20 A"/>
    <property type="chains" value="A=100-262"/>
</dbReference>
<dbReference type="PDB" id="5H8X">
    <property type="method" value="X-ray"/>
    <property type="resolution" value="1.30 A"/>
    <property type="chains" value="A=100-262"/>
</dbReference>
<dbReference type="PDBsum" id="1A85"/>
<dbReference type="PDBsum" id="1A86"/>
<dbReference type="PDBsum" id="1BZS"/>
<dbReference type="PDBsum" id="1I73"/>
<dbReference type="PDBsum" id="1I76"/>
<dbReference type="PDBsum" id="1JAN"/>
<dbReference type="PDBsum" id="1JAO"/>
<dbReference type="PDBsum" id="1JAP"/>
<dbReference type="PDBsum" id="1JAQ"/>
<dbReference type="PDBsum" id="1JH1"/>
<dbReference type="PDBsum" id="1JJ9"/>
<dbReference type="PDBsum" id="1KBC"/>
<dbReference type="PDBsum" id="1MMB"/>
<dbReference type="PDBsum" id="1MNC"/>
<dbReference type="PDBsum" id="1ZP5"/>
<dbReference type="PDBsum" id="1ZS0"/>
<dbReference type="PDBsum" id="1ZVX"/>
<dbReference type="PDBsum" id="2OY2"/>
<dbReference type="PDBsum" id="2OY4"/>
<dbReference type="PDBsum" id="3DNG"/>
<dbReference type="PDBsum" id="3DPE"/>
<dbReference type="PDBsum" id="3DPF"/>
<dbReference type="PDBsum" id="3TT4"/>
<dbReference type="PDBsum" id="4QKZ"/>
<dbReference type="PDBsum" id="5H8X"/>
<dbReference type="SMR" id="P22894"/>
<dbReference type="BioGRID" id="110460">
    <property type="interactions" value="21"/>
</dbReference>
<dbReference type="FunCoup" id="P22894">
    <property type="interactions" value="33"/>
</dbReference>
<dbReference type="IntAct" id="P22894">
    <property type="interactions" value="3"/>
</dbReference>
<dbReference type="STRING" id="9606.ENSP00000236826"/>
<dbReference type="BindingDB" id="P22894"/>
<dbReference type="ChEMBL" id="CHEMBL4588"/>
<dbReference type="DrugBank" id="DB07772">
    <property type="generic name" value="(1R)-1-{[(4'-methoxy-1,1'-biphenyl-4-yl)sulfonyl]amino}-2-methylpropylphosphonic acid"/>
</dbReference>
<dbReference type="DrugBank" id="DB07713">
    <property type="generic name" value="(1S)-1-{[(4'-methoxy-1,1'-biphenyl-4-yl)sulfonyl]amino}-2-methylpropylphosphonic acid"/>
</dbReference>
<dbReference type="DrugBank" id="DB07145">
    <property type="generic name" value="(2R)-N-HYDROXY-2-[(3S)-3-METHYL-3-{4-[(2-METHYLQUINOLIN-4-YL)METHOXY]PHENYL}-2-OXOPYRROLIDIN-1-YL]PROPANAMIDE"/>
</dbReference>
<dbReference type="DrugBank" id="DB07397">
    <property type="generic name" value="(5S)-5-(2-amino-2-oxoethyl)-4-oxo-N-[(3-oxo-3,4-dihydro-2H-1,4-benzoxazin-6-yl)methyl]-3,4,5,6,7,8-hexahydro[1]benzothieno[2,3-d]pyrimidine-2-carboxamide"/>
</dbReference>
<dbReference type="DrugBank" id="DB02326">
    <property type="generic name" value="1-Hydroxyamine-2-Isobutylmalonic Acid"/>
</dbReference>
<dbReference type="DrugBank" id="DB03207">
    <property type="generic name" value="2-(Biphenyl-4-Sulfonyl)-1,2,3,4-Tetrahydro-Isoquinoline-3-Carboxylic Acid"/>
</dbReference>
<dbReference type="DrugBank" id="DB02953">
    <property type="generic name" value="2-Thiomethyl-3-Phenylpropanoic Acid"/>
</dbReference>
<dbReference type="DrugBank" id="DB08476">
    <property type="generic name" value="3-AMINO-AZACYCLOTRIDECAN-2-ONE"/>
</dbReference>
<dbReference type="DrugBank" id="DB07900">
    <property type="generic name" value="3-FORMYL-2-HYDROXY-5-METHYL-HEXANOIC ACID HYDROXYAMIDE"/>
</dbReference>
<dbReference type="DrugBank" id="DB03622">
    <property type="generic name" value="5-[4-(2-Hydroxyethyl)-1-piperidinyl]-5-phenyl-2,4,6(1H,3H,5H)-pyrimidinetrione"/>
</dbReference>
<dbReference type="DrugBank" id="DB03880">
    <property type="generic name" value="Batimastat"/>
</dbReference>
<dbReference type="DrugBank" id="DB08028">
    <property type="generic name" value="BUT-3-ENYL-[5-(4-CHLORO-PHENYL)-3,6-DIHYDRO-[1,3,4]THIADIAZIN-2-YLIDENE]-AMINE"/>
</dbReference>
<dbReference type="DrugBank" id="DB07556">
    <property type="generic name" value="CGS-27023"/>
</dbReference>
<dbReference type="DrugBank" id="DB03636">
    <property type="generic name" value="Glycinamide"/>
</dbReference>
<dbReference type="DrugBank" id="DB02255">
    <property type="generic name" value="Ilomastat"/>
</dbReference>
<dbReference type="DrugBank" id="DB00786">
    <property type="generic name" value="Marimastat"/>
</dbReference>
<dbReference type="DrugBank" id="DB08403">
    <property type="generic name" value="METHYLAMINO-PHENYLALANYL-LEUCYL-HYDROXAMIC ACID"/>
</dbReference>
<dbReference type="DrugBank" id="DB07926">
    <property type="generic name" value="N-[3-(N'-HYDROXYCARBOXAMIDO)-2-(2-METHYLPROPYL)-PROPANOYL]-O-TYROSINE-N-METHYLAMIDE"/>
</dbReference>
<dbReference type="DrugBank" id="DB06971">
    <property type="generic name" value="N-{2-[(4'-CYANO-1,1'-BIPHENYL-4-YL)OXY]ETHYL}-N'-HYDROXY-N-METHYLUREA"/>
</dbReference>
<dbReference type="DrugCentral" id="P22894"/>
<dbReference type="GuidetoPHARMACOLOGY" id="1632"/>
<dbReference type="MEROPS" id="M10.002"/>
<dbReference type="GlyCosmos" id="P22894">
    <property type="glycosylation" value="5 sites, No reported glycans"/>
</dbReference>
<dbReference type="GlyGen" id="P22894">
    <property type="glycosylation" value="5 sites, 2 N-linked glycans (1 site)"/>
</dbReference>
<dbReference type="iPTMnet" id="P22894"/>
<dbReference type="PhosphoSitePlus" id="P22894"/>
<dbReference type="BioMuta" id="MMP8"/>
<dbReference type="DMDM" id="116862"/>
<dbReference type="jPOST" id="P22894"/>
<dbReference type="MassIVE" id="P22894"/>
<dbReference type="PaxDb" id="9606-ENSP00000236826"/>
<dbReference type="PeptideAtlas" id="P22894"/>
<dbReference type="PRIDE" id="P22894"/>
<dbReference type="ProteomicsDB" id="54047"/>
<dbReference type="TopDownProteomics" id="P22894"/>
<dbReference type="Antibodypedia" id="18018">
    <property type="antibodies" value="677 antibodies from 40 providers"/>
</dbReference>
<dbReference type="DNASU" id="4317"/>
<dbReference type="Ensembl" id="ENST00000236826.8">
    <property type="protein sequence ID" value="ENSP00000236826.3"/>
    <property type="gene ID" value="ENSG00000118113.12"/>
</dbReference>
<dbReference type="GeneID" id="4317"/>
<dbReference type="KEGG" id="hsa:4317"/>
<dbReference type="MANE-Select" id="ENST00000236826.8">
    <property type="protein sequence ID" value="ENSP00000236826.3"/>
    <property type="RefSeq nucleotide sequence ID" value="NM_002424.3"/>
    <property type="RefSeq protein sequence ID" value="NP_002415.1"/>
</dbReference>
<dbReference type="UCSC" id="uc001phe.2">
    <property type="organism name" value="human"/>
</dbReference>
<dbReference type="AGR" id="HGNC:7175"/>
<dbReference type="CTD" id="4317"/>
<dbReference type="DisGeNET" id="4317"/>
<dbReference type="GeneCards" id="MMP8"/>
<dbReference type="HGNC" id="HGNC:7175">
    <property type="gene designation" value="MMP8"/>
</dbReference>
<dbReference type="HPA" id="ENSG00000118113">
    <property type="expression patterns" value="Tissue enriched (bone)"/>
</dbReference>
<dbReference type="MalaCards" id="MMP8"/>
<dbReference type="MIM" id="120355">
    <property type="type" value="gene"/>
</dbReference>
<dbReference type="neXtProt" id="NX_P22894"/>
<dbReference type="OpenTargets" id="ENSG00000118113"/>
<dbReference type="PharmGKB" id="PA30888"/>
<dbReference type="VEuPathDB" id="HostDB:ENSG00000118113"/>
<dbReference type="eggNOG" id="KOG1565">
    <property type="taxonomic scope" value="Eukaryota"/>
</dbReference>
<dbReference type="GeneTree" id="ENSGT00940000161871"/>
<dbReference type="InParanoid" id="P22894"/>
<dbReference type="OMA" id="RSNLWLN"/>
<dbReference type="OrthoDB" id="406838at2759"/>
<dbReference type="PAN-GO" id="P22894">
    <property type="GO annotations" value="3 GO annotations based on evolutionary models"/>
</dbReference>
<dbReference type="PhylomeDB" id="P22894"/>
<dbReference type="TreeFam" id="TF315428"/>
<dbReference type="BRENDA" id="3.4.24.34">
    <property type="organism ID" value="2681"/>
</dbReference>
<dbReference type="PathwayCommons" id="P22894"/>
<dbReference type="Reactome" id="R-HSA-1442490">
    <property type="pathway name" value="Collagen degradation"/>
</dbReference>
<dbReference type="Reactome" id="R-HSA-1474228">
    <property type="pathway name" value="Degradation of the extracellular matrix"/>
</dbReference>
<dbReference type="Reactome" id="R-HSA-1592389">
    <property type="pathway name" value="Activation of Matrix Metalloproteinases"/>
</dbReference>
<dbReference type="Reactome" id="R-HSA-6798695">
    <property type="pathway name" value="Neutrophil degranulation"/>
</dbReference>
<dbReference type="SignaLink" id="P22894"/>
<dbReference type="SIGNOR" id="P22894"/>
<dbReference type="BioGRID-ORCS" id="4317">
    <property type="hits" value="12 hits in 1157 CRISPR screens"/>
</dbReference>
<dbReference type="EvolutionaryTrace" id="P22894"/>
<dbReference type="GeneWiki" id="MMP8"/>
<dbReference type="GenomeRNAi" id="4317"/>
<dbReference type="Pharos" id="P22894">
    <property type="development level" value="Tchem"/>
</dbReference>
<dbReference type="PRO" id="PR:P22894"/>
<dbReference type="Proteomes" id="UP000005640">
    <property type="component" value="Chromosome 11"/>
</dbReference>
<dbReference type="RNAct" id="P22894">
    <property type="molecule type" value="protein"/>
</dbReference>
<dbReference type="Bgee" id="ENSG00000118113">
    <property type="expression patterns" value="Expressed in trabecular bone tissue and 105 other cell types or tissues"/>
</dbReference>
<dbReference type="ExpressionAtlas" id="P22894">
    <property type="expression patterns" value="baseline and differential"/>
</dbReference>
<dbReference type="GO" id="GO:0062023">
    <property type="term" value="C:collagen-containing extracellular matrix"/>
    <property type="evidence" value="ECO:0007005"/>
    <property type="project" value="BHF-UCL"/>
</dbReference>
<dbReference type="GO" id="GO:0005576">
    <property type="term" value="C:extracellular region"/>
    <property type="evidence" value="ECO:0000304"/>
    <property type="project" value="Reactome"/>
</dbReference>
<dbReference type="GO" id="GO:0005615">
    <property type="term" value="C:extracellular space"/>
    <property type="evidence" value="ECO:0000314"/>
    <property type="project" value="UniProtKB"/>
</dbReference>
<dbReference type="GO" id="GO:0035580">
    <property type="term" value="C:specific granule lumen"/>
    <property type="evidence" value="ECO:0000304"/>
    <property type="project" value="Reactome"/>
</dbReference>
<dbReference type="GO" id="GO:1904724">
    <property type="term" value="C:tertiary granule lumen"/>
    <property type="evidence" value="ECO:0000304"/>
    <property type="project" value="Reactome"/>
</dbReference>
<dbReference type="GO" id="GO:0004175">
    <property type="term" value="F:endopeptidase activity"/>
    <property type="evidence" value="ECO:0000315"/>
    <property type="project" value="ARUK-UCL"/>
</dbReference>
<dbReference type="GO" id="GO:0004222">
    <property type="term" value="F:metalloendopeptidase activity"/>
    <property type="evidence" value="ECO:0000318"/>
    <property type="project" value="GO_Central"/>
</dbReference>
<dbReference type="GO" id="GO:0008233">
    <property type="term" value="F:peptidase activity"/>
    <property type="evidence" value="ECO:0000314"/>
    <property type="project" value="UniProtKB"/>
</dbReference>
<dbReference type="GO" id="GO:0004252">
    <property type="term" value="F:serine-type endopeptidase activity"/>
    <property type="evidence" value="ECO:0000314"/>
    <property type="project" value="UniProtKB"/>
</dbReference>
<dbReference type="GO" id="GO:0043120">
    <property type="term" value="F:tumor necrosis factor binding"/>
    <property type="evidence" value="ECO:0000314"/>
    <property type="project" value="ARUK-UCL"/>
</dbReference>
<dbReference type="GO" id="GO:0008270">
    <property type="term" value="F:zinc ion binding"/>
    <property type="evidence" value="ECO:0000304"/>
    <property type="project" value="UniProtKB"/>
</dbReference>
<dbReference type="GO" id="GO:0071222">
    <property type="term" value="P:cellular response to lipopolysaccharide"/>
    <property type="evidence" value="ECO:0000250"/>
    <property type="project" value="ARUK-UCL"/>
</dbReference>
<dbReference type="GO" id="GO:0030574">
    <property type="term" value="P:collagen catabolic process"/>
    <property type="evidence" value="ECO:0000318"/>
    <property type="project" value="GO_Central"/>
</dbReference>
<dbReference type="GO" id="GO:0035987">
    <property type="term" value="P:endodermal cell differentiation"/>
    <property type="evidence" value="ECO:0000270"/>
    <property type="project" value="UniProtKB"/>
</dbReference>
<dbReference type="GO" id="GO:0022617">
    <property type="term" value="P:extracellular matrix disassembly"/>
    <property type="evidence" value="ECO:0000304"/>
    <property type="project" value="Reactome"/>
</dbReference>
<dbReference type="GO" id="GO:0030198">
    <property type="term" value="P:extracellular matrix organization"/>
    <property type="evidence" value="ECO:0000318"/>
    <property type="project" value="GO_Central"/>
</dbReference>
<dbReference type="GO" id="GO:1903980">
    <property type="term" value="P:positive regulation of microglial cell activation"/>
    <property type="evidence" value="ECO:0000250"/>
    <property type="project" value="ARUK-UCL"/>
</dbReference>
<dbReference type="GO" id="GO:0150078">
    <property type="term" value="P:positive regulation of neuroinflammatory response"/>
    <property type="evidence" value="ECO:0000250"/>
    <property type="project" value="ARUK-UCL"/>
</dbReference>
<dbReference type="GO" id="GO:0032760">
    <property type="term" value="P:positive regulation of tumor necrosis factor production"/>
    <property type="evidence" value="ECO:0000315"/>
    <property type="project" value="ARUK-UCL"/>
</dbReference>
<dbReference type="GO" id="GO:1903265">
    <property type="term" value="P:positive regulation of tumor necrosis factor-mediated signaling pathway"/>
    <property type="evidence" value="ECO:0000250"/>
    <property type="project" value="ARUK-UCL"/>
</dbReference>
<dbReference type="GO" id="GO:0006508">
    <property type="term" value="P:proteolysis"/>
    <property type="evidence" value="ECO:0000314"/>
    <property type="project" value="UniProtKB"/>
</dbReference>
<dbReference type="CDD" id="cd00094">
    <property type="entry name" value="HX"/>
    <property type="match status" value="1"/>
</dbReference>
<dbReference type="CDD" id="cd04278">
    <property type="entry name" value="ZnMc_MMP"/>
    <property type="match status" value="1"/>
</dbReference>
<dbReference type="FunFam" id="3.40.390.10:FF:000007">
    <property type="entry name" value="Collagenase 3"/>
    <property type="match status" value="1"/>
</dbReference>
<dbReference type="FunFam" id="2.110.10.10:FF:000002">
    <property type="entry name" value="Matrix metallopeptidase 3"/>
    <property type="match status" value="1"/>
</dbReference>
<dbReference type="Gene3D" id="3.40.390.10">
    <property type="entry name" value="Collagenase (Catalytic Domain)"/>
    <property type="match status" value="1"/>
</dbReference>
<dbReference type="Gene3D" id="2.110.10.10">
    <property type="entry name" value="Hemopexin-like domain"/>
    <property type="match status" value="1"/>
</dbReference>
<dbReference type="InterPro" id="IPR000585">
    <property type="entry name" value="Hemopexin-like_dom"/>
</dbReference>
<dbReference type="InterPro" id="IPR036375">
    <property type="entry name" value="Hemopexin-like_dom_sf"/>
</dbReference>
<dbReference type="InterPro" id="IPR018487">
    <property type="entry name" value="Hemopexin-like_repeat"/>
</dbReference>
<dbReference type="InterPro" id="IPR018486">
    <property type="entry name" value="Hemopexin_CS"/>
</dbReference>
<dbReference type="InterPro" id="IPR033739">
    <property type="entry name" value="M10A_MMP"/>
</dbReference>
<dbReference type="InterPro" id="IPR024079">
    <property type="entry name" value="MetalloPept_cat_dom_sf"/>
</dbReference>
<dbReference type="InterPro" id="IPR001818">
    <property type="entry name" value="Pept_M10_metallopeptidase"/>
</dbReference>
<dbReference type="InterPro" id="IPR021190">
    <property type="entry name" value="Pept_M10A"/>
</dbReference>
<dbReference type="InterPro" id="IPR021158">
    <property type="entry name" value="Pept_M10A_Zn_BS"/>
</dbReference>
<dbReference type="InterPro" id="IPR006026">
    <property type="entry name" value="Peptidase_Metallo"/>
</dbReference>
<dbReference type="InterPro" id="IPR002477">
    <property type="entry name" value="Peptidoglycan-bd-like"/>
</dbReference>
<dbReference type="InterPro" id="IPR036365">
    <property type="entry name" value="PGBD-like_sf"/>
</dbReference>
<dbReference type="PANTHER" id="PTHR10201">
    <property type="entry name" value="MATRIX METALLOPROTEINASE"/>
    <property type="match status" value="1"/>
</dbReference>
<dbReference type="PANTHER" id="PTHR10201:SF137">
    <property type="entry name" value="NEUTROPHIL COLLAGENASE"/>
    <property type="match status" value="1"/>
</dbReference>
<dbReference type="Pfam" id="PF00045">
    <property type="entry name" value="Hemopexin"/>
    <property type="match status" value="4"/>
</dbReference>
<dbReference type="Pfam" id="PF00413">
    <property type="entry name" value="Peptidase_M10"/>
    <property type="match status" value="1"/>
</dbReference>
<dbReference type="Pfam" id="PF01471">
    <property type="entry name" value="PG_binding_1"/>
    <property type="match status" value="1"/>
</dbReference>
<dbReference type="PIRSF" id="PIRSF001191">
    <property type="entry name" value="Peptidase_M10A_matrix"/>
    <property type="match status" value="1"/>
</dbReference>
<dbReference type="PRINTS" id="PR00138">
    <property type="entry name" value="MATRIXIN"/>
</dbReference>
<dbReference type="SMART" id="SM00120">
    <property type="entry name" value="HX"/>
    <property type="match status" value="4"/>
</dbReference>
<dbReference type="SMART" id="SM00235">
    <property type="entry name" value="ZnMc"/>
    <property type="match status" value="1"/>
</dbReference>
<dbReference type="SUPFAM" id="SSF50923">
    <property type="entry name" value="Hemopexin-like domain"/>
    <property type="match status" value="1"/>
</dbReference>
<dbReference type="SUPFAM" id="SSF55486">
    <property type="entry name" value="Metalloproteases ('zincins'), catalytic domain"/>
    <property type="match status" value="1"/>
</dbReference>
<dbReference type="SUPFAM" id="SSF47090">
    <property type="entry name" value="PGBD-like"/>
    <property type="match status" value="1"/>
</dbReference>
<dbReference type="PROSITE" id="PS00546">
    <property type="entry name" value="CYSTEINE_SWITCH"/>
    <property type="match status" value="1"/>
</dbReference>
<dbReference type="PROSITE" id="PS00024">
    <property type="entry name" value="HEMOPEXIN"/>
    <property type="match status" value="1"/>
</dbReference>
<dbReference type="PROSITE" id="PS51642">
    <property type="entry name" value="HEMOPEXIN_2"/>
    <property type="match status" value="4"/>
</dbReference>
<dbReference type="PROSITE" id="PS00142">
    <property type="entry name" value="ZINC_PROTEASE"/>
    <property type="match status" value="1"/>
</dbReference>
<comment type="function">
    <text>Can degrade fibrillar type I, II, and III collagens.</text>
</comment>
<comment type="catalytic activity">
    <reaction>
        <text>Cleavage of interstitial collagens in the triple helical domain. Unlike EC 3.4.24.7, this enzyme cleaves type III collagen more slowly than type I.</text>
        <dbReference type="EC" id="3.4.24.34"/>
    </reaction>
</comment>
<comment type="cofactor">
    <cofactor>
        <name>Ca(2+)</name>
        <dbReference type="ChEBI" id="CHEBI:29108"/>
    </cofactor>
    <text>Binds 3 Ca(2+) ions per subunit.</text>
</comment>
<comment type="cofactor">
    <cofactor>
        <name>Zn(2+)</name>
        <dbReference type="ChEBI" id="CHEBI:29105"/>
    </cofactor>
    <text>Binds 2 Zn(2+) ions per subunit.</text>
</comment>
<comment type="activity regulation">
    <text>Cannot be activated without removal of the activation peptide.</text>
</comment>
<comment type="subcellular location">
    <subcellularLocation>
        <location>Cytoplasmic granule</location>
    </subcellularLocation>
    <subcellularLocation>
        <location evidence="7">Secreted</location>
        <location evidence="7">Extracellular space</location>
        <location evidence="7">Extracellular matrix</location>
    </subcellularLocation>
    <text>Stored in intracellular granules.</text>
</comment>
<comment type="tissue specificity">
    <text>Neutrophils.</text>
</comment>
<comment type="domain">
    <text>The conserved cysteine present in the cysteine-switch motif binds the catalytic zinc ion, thus inhibiting the enzyme. The dissociation of the cysteine from the zinc ion upon the activation-peptide release activates the enzyme.</text>
</comment>
<comment type="similarity">
    <text evidence="7">Belongs to the peptidase M10A family.</text>
</comment>
<evidence type="ECO:0000250" key="1"/>
<evidence type="ECO:0000255" key="2"/>
<evidence type="ECO:0000269" key="3">
    <source>
    </source>
</evidence>
<evidence type="ECO:0000269" key="4">
    <source>
    </source>
</evidence>
<evidence type="ECO:0000269" key="5">
    <source>
    </source>
</evidence>
<evidence type="ECO:0000269" key="6">
    <source ref="2"/>
</evidence>
<evidence type="ECO:0000305" key="7"/>
<evidence type="ECO:0007829" key="8">
    <source>
        <dbReference type="PDB" id="1I76"/>
    </source>
</evidence>
<evidence type="ECO:0007829" key="9">
    <source>
        <dbReference type="PDB" id="1JAQ"/>
    </source>
</evidence>
<evidence type="ECO:0007829" key="10">
    <source>
        <dbReference type="PDB" id="1MNC"/>
    </source>
</evidence>
<evidence type="ECO:0007829" key="11">
    <source>
        <dbReference type="PDB" id="1ZP5"/>
    </source>
</evidence>
<name>MMP8_HUMAN</name>
<protein>
    <recommendedName>
        <fullName>Neutrophil collagenase</fullName>
        <ecNumber>3.4.24.34</ecNumber>
    </recommendedName>
    <alternativeName>
        <fullName>Matrix metalloproteinase-8</fullName>
        <shortName>MMP-8</shortName>
    </alternativeName>
    <alternativeName>
        <fullName>PMNL collagenase</fullName>
        <shortName>PMNL-CL</shortName>
    </alternativeName>
</protein>
<keyword id="KW-0002">3D-structure</keyword>
<keyword id="KW-0106">Calcium</keyword>
<keyword id="KW-0177">Collagen degradation</keyword>
<keyword id="KW-0903">Direct protein sequencing</keyword>
<keyword id="KW-1015">Disulfide bond</keyword>
<keyword id="KW-0272">Extracellular matrix</keyword>
<keyword id="KW-0325">Glycoprotein</keyword>
<keyword id="KW-0378">Hydrolase</keyword>
<keyword id="KW-0479">Metal-binding</keyword>
<keyword id="KW-0482">Metalloprotease</keyword>
<keyword id="KW-0645">Protease</keyword>
<keyword id="KW-1267">Proteomics identification</keyword>
<keyword id="KW-1185">Reference proteome</keyword>
<keyword id="KW-0677">Repeat</keyword>
<keyword id="KW-0964">Secreted</keyword>
<keyword id="KW-0732">Signal</keyword>
<keyword id="KW-0862">Zinc</keyword>
<keyword id="KW-0865">Zymogen</keyword>